<comment type="function">
    <text evidence="1">Catalyzes the NAD(+)-dependent oxidation of L-carnitine to 3-dehydrocarnitine.</text>
</comment>
<comment type="catalytic activity">
    <reaction evidence="1">
        <text>carnitine + NAD(+) = 3-dehydrocarnitine + NADH + H(+)</text>
        <dbReference type="Rhea" id="RHEA:19265"/>
        <dbReference type="ChEBI" id="CHEBI:15378"/>
        <dbReference type="ChEBI" id="CHEBI:17126"/>
        <dbReference type="ChEBI" id="CHEBI:57540"/>
        <dbReference type="ChEBI" id="CHEBI:57885"/>
        <dbReference type="ChEBI" id="CHEBI:57945"/>
        <dbReference type="EC" id="1.1.1.108"/>
    </reaction>
</comment>
<comment type="pathway">
    <text evidence="1">Amine and polyamine metabolism; carnitine metabolism.</text>
</comment>
<comment type="subunit">
    <text evidence="1">Homodimer.</text>
</comment>
<comment type="subcellular location">
    <subcellularLocation>
        <location evidence="1">Cytoplasm</location>
    </subcellularLocation>
</comment>
<comment type="similarity">
    <text evidence="1">Belongs to the 3-hydroxyacyl-CoA dehydrogenase family. L-carnitine dehydrogenase subfamily.</text>
</comment>
<organism>
    <name type="scientific">Streptomyces coelicolor (strain ATCC BAA-471 / A3(2) / M145)</name>
    <dbReference type="NCBI Taxonomy" id="100226"/>
    <lineage>
        <taxon>Bacteria</taxon>
        <taxon>Bacillati</taxon>
        <taxon>Actinomycetota</taxon>
        <taxon>Actinomycetes</taxon>
        <taxon>Kitasatosporales</taxon>
        <taxon>Streptomycetaceae</taxon>
        <taxon>Streptomyces</taxon>
        <taxon>Streptomyces albidoflavus group</taxon>
    </lineage>
</organism>
<gene>
    <name evidence="2" type="ordered locus">SCO6297</name>
</gene>
<dbReference type="EC" id="1.1.1.108" evidence="1"/>
<dbReference type="EMBL" id="AL939127">
    <property type="protein sequence ID" value="CAC37899.1"/>
    <property type="molecule type" value="Genomic_DNA"/>
</dbReference>
<dbReference type="RefSeq" id="NP_630395.1">
    <property type="nucleotide sequence ID" value="NC_003888.3"/>
</dbReference>
<dbReference type="RefSeq" id="WP_011030804.1">
    <property type="nucleotide sequence ID" value="NZ_VNID01000022.1"/>
</dbReference>
<dbReference type="SMR" id="Q93RX5"/>
<dbReference type="STRING" id="100226.gene:17763956"/>
<dbReference type="PaxDb" id="100226-SCO6297"/>
<dbReference type="KEGG" id="sco:SCO6297"/>
<dbReference type="PATRIC" id="fig|100226.15.peg.6411"/>
<dbReference type="eggNOG" id="COG1250">
    <property type="taxonomic scope" value="Bacteria"/>
</dbReference>
<dbReference type="HOGENOM" id="CLU_009834_0_1_11"/>
<dbReference type="InParanoid" id="Q93RX5"/>
<dbReference type="OrthoDB" id="9771883at2"/>
<dbReference type="PhylomeDB" id="Q93RX5"/>
<dbReference type="UniPathway" id="UPA00117"/>
<dbReference type="Proteomes" id="UP000001973">
    <property type="component" value="Chromosome"/>
</dbReference>
<dbReference type="GO" id="GO:0005737">
    <property type="term" value="C:cytoplasm"/>
    <property type="evidence" value="ECO:0007669"/>
    <property type="project" value="UniProtKB-SubCell"/>
</dbReference>
<dbReference type="GO" id="GO:0047728">
    <property type="term" value="F:carnitine 3-dehydrogenase activity"/>
    <property type="evidence" value="ECO:0007669"/>
    <property type="project" value="UniProtKB-UniRule"/>
</dbReference>
<dbReference type="GO" id="GO:0070403">
    <property type="term" value="F:NAD+ binding"/>
    <property type="evidence" value="ECO:0007669"/>
    <property type="project" value="InterPro"/>
</dbReference>
<dbReference type="GO" id="GO:0016491">
    <property type="term" value="F:oxidoreductase activity"/>
    <property type="evidence" value="ECO:0000318"/>
    <property type="project" value="GO_Central"/>
</dbReference>
<dbReference type="GO" id="GO:0009437">
    <property type="term" value="P:carnitine metabolic process"/>
    <property type="evidence" value="ECO:0007669"/>
    <property type="project" value="UniProtKB-UniRule"/>
</dbReference>
<dbReference type="GO" id="GO:0009056">
    <property type="term" value="P:catabolic process"/>
    <property type="evidence" value="ECO:0007669"/>
    <property type="project" value="UniProtKB-ARBA"/>
</dbReference>
<dbReference type="GO" id="GO:0006631">
    <property type="term" value="P:fatty acid metabolic process"/>
    <property type="evidence" value="ECO:0007669"/>
    <property type="project" value="InterPro"/>
</dbReference>
<dbReference type="Gene3D" id="1.10.1040.10">
    <property type="entry name" value="N-(1-d-carboxylethyl)-l-norvaline Dehydrogenase, domain 2"/>
    <property type="match status" value="1"/>
</dbReference>
<dbReference type="Gene3D" id="3.40.50.720">
    <property type="entry name" value="NAD(P)-binding Rossmann-like Domain"/>
    <property type="match status" value="1"/>
</dbReference>
<dbReference type="HAMAP" id="MF_02129">
    <property type="entry name" value="L_carnitine_dehydrog"/>
    <property type="match status" value="1"/>
</dbReference>
<dbReference type="InterPro" id="IPR006176">
    <property type="entry name" value="3-OHacyl-CoA_DH_NAD-bd"/>
</dbReference>
<dbReference type="InterPro" id="IPR006108">
    <property type="entry name" value="3HC_DH_C"/>
</dbReference>
<dbReference type="InterPro" id="IPR008927">
    <property type="entry name" value="6-PGluconate_DH-like_C_sf"/>
</dbReference>
<dbReference type="InterPro" id="IPR013328">
    <property type="entry name" value="6PGD_dom2"/>
</dbReference>
<dbReference type="InterPro" id="IPR026578">
    <property type="entry name" value="L-carnitine_dehydrogenase"/>
</dbReference>
<dbReference type="InterPro" id="IPR036291">
    <property type="entry name" value="NAD(P)-bd_dom_sf"/>
</dbReference>
<dbReference type="PANTHER" id="PTHR48075">
    <property type="entry name" value="3-HYDROXYACYL-COA DEHYDROGENASE FAMILY PROTEIN"/>
    <property type="match status" value="1"/>
</dbReference>
<dbReference type="PANTHER" id="PTHR48075:SF5">
    <property type="entry name" value="3-HYDROXYBUTYRYL-COA DEHYDROGENASE"/>
    <property type="match status" value="1"/>
</dbReference>
<dbReference type="Pfam" id="PF00725">
    <property type="entry name" value="3HCDH"/>
    <property type="match status" value="1"/>
</dbReference>
<dbReference type="Pfam" id="PF02737">
    <property type="entry name" value="3HCDH_N"/>
    <property type="match status" value="1"/>
</dbReference>
<dbReference type="SUPFAM" id="SSF48179">
    <property type="entry name" value="6-phosphogluconate dehydrogenase C-terminal domain-like"/>
    <property type="match status" value="1"/>
</dbReference>
<dbReference type="SUPFAM" id="SSF51735">
    <property type="entry name" value="NAD(P)-binding Rossmann-fold domains"/>
    <property type="match status" value="1"/>
</dbReference>
<accession>Q93RX5</accession>
<protein>
    <recommendedName>
        <fullName evidence="1">L-carnitine dehydrogenase</fullName>
        <shortName evidence="1">CDH</shortName>
        <shortName evidence="1">L-CDH</shortName>
        <ecNumber evidence="1">1.1.1.108</ecNumber>
    </recommendedName>
</protein>
<reference key="1">
    <citation type="journal article" date="2002" name="Nature">
        <title>Complete genome sequence of the model actinomycete Streptomyces coelicolor A3(2).</title>
        <authorList>
            <person name="Bentley S.D."/>
            <person name="Chater K.F."/>
            <person name="Cerdeno-Tarraga A.-M."/>
            <person name="Challis G.L."/>
            <person name="Thomson N.R."/>
            <person name="James K.D."/>
            <person name="Harris D.E."/>
            <person name="Quail M.A."/>
            <person name="Kieser H."/>
            <person name="Harper D."/>
            <person name="Bateman A."/>
            <person name="Brown S."/>
            <person name="Chandra G."/>
            <person name="Chen C.W."/>
            <person name="Collins M."/>
            <person name="Cronin A."/>
            <person name="Fraser A."/>
            <person name="Goble A."/>
            <person name="Hidalgo J."/>
            <person name="Hornsby T."/>
            <person name="Howarth S."/>
            <person name="Huang C.-H."/>
            <person name="Kieser T."/>
            <person name="Larke L."/>
            <person name="Murphy L.D."/>
            <person name="Oliver K."/>
            <person name="O'Neil S."/>
            <person name="Rabbinowitsch E."/>
            <person name="Rajandream M.A."/>
            <person name="Rutherford K.M."/>
            <person name="Rutter S."/>
            <person name="Seeger K."/>
            <person name="Saunders D."/>
            <person name="Sharp S."/>
            <person name="Squares R."/>
            <person name="Squares S."/>
            <person name="Taylor K."/>
            <person name="Warren T."/>
            <person name="Wietzorrek A."/>
            <person name="Woodward J.R."/>
            <person name="Barrell B.G."/>
            <person name="Parkhill J."/>
            <person name="Hopwood D.A."/>
        </authorList>
    </citation>
    <scope>NUCLEOTIDE SEQUENCE [LARGE SCALE GENOMIC DNA]</scope>
    <source>
        <strain>ATCC BAA-471 / A3(2) / M145</strain>
    </source>
</reference>
<feature type="chain" id="PRO_0000417909" description="L-carnitine dehydrogenase">
    <location>
        <begin position="1"/>
        <end position="318"/>
    </location>
</feature>
<feature type="binding site" evidence="1">
    <location>
        <begin position="14"/>
        <end position="19"/>
    </location>
    <ligand>
        <name>NAD(+)</name>
        <dbReference type="ChEBI" id="CHEBI:57540"/>
    </ligand>
</feature>
<evidence type="ECO:0000255" key="1">
    <source>
        <dbReference type="HAMAP-Rule" id="MF_02129"/>
    </source>
</evidence>
<evidence type="ECO:0000312" key="2">
    <source>
        <dbReference type="EMBL" id="CAC37899.1"/>
    </source>
</evidence>
<proteinExistence type="inferred from homology"/>
<sequence length="318" mass="33922">MTSPENVRRVACVGAGVIGGGWVAHFLARGYEVTAWDPAPDAEPRLRRLVEAAWPTLTRLGLAEGASTDRLTVTDTLEQAVADAEFVQESAPEKLDLKRDLLARLDAATPPGVVIASSTSGYPMTDMQTTAADPSRLVVGHPFNPPYLIPLVEVVGGERTAAAAVAWASRFYEVAGKSVITMDNEVPGFIANRLQEALWREALHMVASGEATVRDIDLSITEGPGLRWAVMGPMLTFALAGGEGGMAHMLDHFGPSLKSPWTRLAAPELDKELYDAVVAGCDEAADGRSIADLVAERDRGVVEVLRATGRLGPEEDSR</sequence>
<keyword id="KW-0963">Cytoplasm</keyword>
<keyword id="KW-0520">NAD</keyword>
<keyword id="KW-0560">Oxidoreductase</keyword>
<keyword id="KW-1185">Reference proteome</keyword>
<name>LCDH_STRCO</name>